<proteinExistence type="evidence at protein level"/>
<sequence length="449" mass="48233">MGVFDYKNLGTEASKTLFADATAITLYTYHNLDNGFAVGYQQHGLGLGCRHTGRGVARQHRLPGSDPPAFPGILTRKRPPWTRCTQPVGRQSSASALGYGGKVDARGTFFGEKAGYTTAQAEVLGKYDDAGKLLEIGIGFRGTSGPRESLITTPCRSGQRPARRAGPQGLCEKLCRRTFGGLLKTVADYAGAHGLSGKDVLVSGHSLGGLAVNSMADLSTSKWAGFYKDANYLAYASPTQSAGDKVLNIGYENDPVFRALDGSTFNLSSLGVHDKAHESTTDNIVSFNDHYASTLWNVLPFSIANLSTWVSHLPSAYGDGMTRVLESGFYEQMTRDSTIILCPTWSDPARANTWVQDLNRNAEPHTGNTFIIGSDGNDLIQGGKGADFIEGGKGNDTIRDNSGHNTFLFSGHFGQDRIIGYQPTGWCSRAPTAAPTCATTRRPWGPIRC</sequence>
<name>LIPA_PSEFL</name>
<evidence type="ECO:0000250" key="1"/>
<evidence type="ECO:0000255" key="2"/>
<evidence type="ECO:0000255" key="3">
    <source>
        <dbReference type="PROSITE-ProRule" id="PRU10037"/>
    </source>
</evidence>
<evidence type="ECO:0000256" key="4">
    <source>
        <dbReference type="SAM" id="MobiDB-lite"/>
    </source>
</evidence>
<evidence type="ECO:0000305" key="5"/>
<accession>P26504</accession>
<organism>
    <name type="scientific">Pseudomonas fluorescens</name>
    <dbReference type="NCBI Taxonomy" id="294"/>
    <lineage>
        <taxon>Bacteria</taxon>
        <taxon>Pseudomonadati</taxon>
        <taxon>Pseudomonadota</taxon>
        <taxon>Gammaproteobacteria</taxon>
        <taxon>Pseudomonadales</taxon>
        <taxon>Pseudomonadaceae</taxon>
        <taxon>Pseudomonas</taxon>
    </lineage>
</organism>
<reference key="1">
    <citation type="journal article" date="1991" name="Agric. Biol. Chem.">
        <title>Cloning and nucleotide sequence of thermostable lipase gene from Pseudomonas fluorescens SIK W1.</title>
        <authorList>
            <person name="Chung G.H."/>
            <person name="Lee Y.P."/>
            <person name="Jeohn G.H."/>
            <person name="Yoo O.J."/>
            <person name="Rhee J.S."/>
        </authorList>
    </citation>
    <scope>NUCLEOTIDE SEQUENCE [GENOMIC DNA]</scope>
    <scope>PARTIAL PROTEIN SEQUENCE</scope>
    <source>
        <strain>SIK W1</strain>
    </source>
</reference>
<dbReference type="EC" id="3.1.1.3"/>
<dbReference type="EMBL" id="S77830">
    <property type="protein sequence ID" value="AAC60402.1"/>
    <property type="molecule type" value="Genomic_DNA"/>
</dbReference>
<dbReference type="EMBL" id="D11455">
    <property type="protein sequence ID" value="BAA02012.1"/>
    <property type="molecule type" value="Genomic_DNA"/>
</dbReference>
<dbReference type="PIR" id="JQ1277">
    <property type="entry name" value="JQ1277"/>
</dbReference>
<dbReference type="SMR" id="P26504"/>
<dbReference type="ESTHER" id="psefl-siklip">
    <property type="family name" value="Bacterial_lip_FamI.3"/>
</dbReference>
<dbReference type="GO" id="GO:0005509">
    <property type="term" value="F:calcium ion binding"/>
    <property type="evidence" value="ECO:0007669"/>
    <property type="project" value="InterPro"/>
</dbReference>
<dbReference type="GO" id="GO:0004806">
    <property type="term" value="F:triacylglycerol lipase activity"/>
    <property type="evidence" value="ECO:0007669"/>
    <property type="project" value="UniProtKB-EC"/>
</dbReference>
<dbReference type="GO" id="GO:0016042">
    <property type="term" value="P:lipid catabolic process"/>
    <property type="evidence" value="ECO:0007669"/>
    <property type="project" value="UniProtKB-KW"/>
</dbReference>
<dbReference type="Gene3D" id="3.40.50.1820">
    <property type="entry name" value="alpha/beta hydrolase"/>
    <property type="match status" value="1"/>
</dbReference>
<dbReference type="Gene3D" id="2.150.10.10">
    <property type="entry name" value="Serralysin-like metalloprotease, C-terminal"/>
    <property type="match status" value="1"/>
</dbReference>
<dbReference type="InterPro" id="IPR029058">
    <property type="entry name" value="AB_hydrolase_fold"/>
</dbReference>
<dbReference type="InterPro" id="IPR018511">
    <property type="entry name" value="Hemolysin-typ_Ca-bd_CS"/>
</dbReference>
<dbReference type="InterPro" id="IPR001343">
    <property type="entry name" value="Hemolysn_Ca-bd"/>
</dbReference>
<dbReference type="InterPro" id="IPR011049">
    <property type="entry name" value="Serralysin-like_metalloprot_C"/>
</dbReference>
<dbReference type="Pfam" id="PF00353">
    <property type="entry name" value="HemolysinCabind"/>
    <property type="match status" value="1"/>
</dbReference>
<dbReference type="PRINTS" id="PR00313">
    <property type="entry name" value="CABNDNGRPT"/>
</dbReference>
<dbReference type="SUPFAM" id="SSF53474">
    <property type="entry name" value="alpha/beta-Hydrolases"/>
    <property type="match status" value="1"/>
</dbReference>
<dbReference type="SUPFAM" id="SSF51120">
    <property type="entry name" value="beta-Roll"/>
    <property type="match status" value="1"/>
</dbReference>
<dbReference type="PROSITE" id="PS00330">
    <property type="entry name" value="HEMOLYSIN_CALCIUM"/>
    <property type="match status" value="1"/>
</dbReference>
<dbReference type="PROSITE" id="PS00120">
    <property type="entry name" value="LIPASE_SER"/>
    <property type="match status" value="1"/>
</dbReference>
<protein>
    <recommendedName>
        <fullName>Lipase</fullName>
        <ecNumber>3.1.1.3</ecNumber>
    </recommendedName>
    <alternativeName>
        <fullName>Triacylglycerol lipase</fullName>
    </alternativeName>
</protein>
<feature type="signal peptide" evidence="2">
    <location>
        <begin position="1"/>
        <end position="23"/>
    </location>
</feature>
<feature type="chain" id="PRO_0000017742" description="Lipase">
    <location>
        <begin position="24"/>
        <end position="449"/>
    </location>
</feature>
<feature type="repeat" description="Hemolysin-type calcium-binding 1">
    <location>
        <begin position="372"/>
        <end position="389"/>
    </location>
</feature>
<feature type="repeat" description="Hemolysin-type calcium-binding 2">
    <location>
        <begin position="390"/>
        <end position="407"/>
    </location>
</feature>
<feature type="region of interest" description="Disordered" evidence="4">
    <location>
        <begin position="58"/>
        <end position="77"/>
    </location>
</feature>
<feature type="active site" description="Charge relay system" evidence="3">
    <location>
        <position position="206"/>
    </location>
</feature>
<feature type="binding site" evidence="1">
    <location>
        <position position="318"/>
    </location>
    <ligand>
        <name>Ca(2+)</name>
        <dbReference type="ChEBI" id="CHEBI:29108"/>
    </ligand>
</feature>
<feature type="binding site" evidence="1">
    <location>
        <position position="387"/>
    </location>
    <ligand>
        <name>Ca(2+)</name>
        <dbReference type="ChEBI" id="CHEBI:29108"/>
    </ligand>
</feature>
<feature type="binding site" evidence="1">
    <location>
        <position position="396"/>
    </location>
    <ligand>
        <name>Ca(2+)</name>
        <dbReference type="ChEBI" id="CHEBI:29108"/>
    </ligand>
</feature>
<keyword id="KW-0106">Calcium</keyword>
<keyword id="KW-0903">Direct protein sequencing</keyword>
<keyword id="KW-0378">Hydrolase</keyword>
<keyword id="KW-0442">Lipid degradation</keyword>
<keyword id="KW-0443">Lipid metabolism</keyword>
<keyword id="KW-0479">Metal-binding</keyword>
<keyword id="KW-0677">Repeat</keyword>
<keyword id="KW-0732">Signal</keyword>
<comment type="catalytic activity">
    <reaction>
        <text>a triacylglycerol + H2O = a diacylglycerol + a fatty acid + H(+)</text>
        <dbReference type="Rhea" id="RHEA:12044"/>
        <dbReference type="ChEBI" id="CHEBI:15377"/>
        <dbReference type="ChEBI" id="CHEBI:15378"/>
        <dbReference type="ChEBI" id="CHEBI:17855"/>
        <dbReference type="ChEBI" id="CHEBI:18035"/>
        <dbReference type="ChEBI" id="CHEBI:28868"/>
        <dbReference type="EC" id="3.1.1.3"/>
    </reaction>
</comment>
<comment type="biophysicochemical properties">
    <temperatureDependence>
        <text>Thermostable.</text>
    </temperatureDependence>
</comment>
<comment type="similarity">
    <text evidence="5">Belongs to the AB hydrolase superfamily. Lipase family.</text>
</comment>